<sequence>MAIHLYKTSTPSTRNGAVDSQVKSNTRNNLIYGQHRCGKGRNSRGIITARHRGGGHKRLYRKIDFRRNEKYIYGRIVTIEYDPNRNAYICLIHYGDGEKRYILHPRGAIIGDTIISGTEVPIKMGNALPLTDMPLGTAIHNIEITLGRGGQLARAAGAVAKLIAKEGKSATLKLPSGEVRLISKNCSATVGQVGNAGVNQKSLGRAGSKCWLGKRPVVRGVVMNPVDHPHGGGEGRAPIGRKKPATPWGYPALGRRSRKRNKYSDNLILRRRSK</sequence>
<gene>
    <name type="primary">rpl2-A</name>
    <name type="ordered locus">Poptr_cp064</name>
</gene>
<gene>
    <name type="primary">rpl2-B</name>
    <name type="ordered locus">Poptr_cp100</name>
</gene>
<organism>
    <name type="scientific">Populus trichocarpa</name>
    <name type="common">Western balsam poplar</name>
    <name type="synonym">Populus balsamifera subsp. trichocarpa</name>
    <dbReference type="NCBI Taxonomy" id="3694"/>
    <lineage>
        <taxon>Eukaryota</taxon>
        <taxon>Viridiplantae</taxon>
        <taxon>Streptophyta</taxon>
        <taxon>Embryophyta</taxon>
        <taxon>Tracheophyta</taxon>
        <taxon>Spermatophyta</taxon>
        <taxon>Magnoliopsida</taxon>
        <taxon>eudicotyledons</taxon>
        <taxon>Gunneridae</taxon>
        <taxon>Pentapetalae</taxon>
        <taxon>rosids</taxon>
        <taxon>fabids</taxon>
        <taxon>Malpighiales</taxon>
        <taxon>Salicaceae</taxon>
        <taxon>Saliceae</taxon>
        <taxon>Populus</taxon>
    </lineage>
</organism>
<geneLocation type="chloroplast"/>
<feature type="chain" id="PRO_0000310087" description="Large ribosomal subunit protein uL2cz/uL2cy">
    <location>
        <begin position="1"/>
        <end position="274"/>
    </location>
</feature>
<feature type="region of interest" description="Disordered" evidence="3">
    <location>
        <begin position="1"/>
        <end position="21"/>
    </location>
</feature>
<feature type="region of interest" description="Disordered" evidence="3">
    <location>
        <begin position="224"/>
        <end position="274"/>
    </location>
</feature>
<proteinExistence type="inferred from homology"/>
<keyword id="KW-0150">Chloroplast</keyword>
<keyword id="KW-0934">Plastid</keyword>
<keyword id="KW-1185">Reference proteome</keyword>
<keyword id="KW-0687">Ribonucleoprotein</keyword>
<keyword id="KW-0689">Ribosomal protein</keyword>
<comment type="subunit">
    <text evidence="1">Part of the 50S ribosomal subunit.</text>
</comment>
<comment type="subcellular location">
    <subcellularLocation>
        <location>Plastid</location>
        <location>Chloroplast</location>
    </subcellularLocation>
</comment>
<comment type="similarity">
    <text evidence="4">Belongs to the universal ribosomal protein uL2 family.</text>
</comment>
<name>RK2_POPTR</name>
<protein>
    <recommendedName>
        <fullName evidence="2">Large ribosomal subunit protein uL2cz/uL2cy</fullName>
    </recommendedName>
    <alternativeName>
        <fullName evidence="4">50S ribosomal protein L2, chloroplastic</fullName>
    </alternativeName>
</protein>
<reference key="1">
    <citation type="journal article" date="2006" name="Science">
        <title>The genome of black cottonwood, Populus trichocarpa (Torr. &amp; Gray).</title>
        <authorList>
            <person name="Tuskan G.A."/>
            <person name="Difazio S."/>
            <person name="Jansson S."/>
            <person name="Bohlmann J."/>
            <person name="Grigoriev I."/>
            <person name="Hellsten U."/>
            <person name="Putnam N."/>
            <person name="Ralph S."/>
            <person name="Rombauts S."/>
            <person name="Salamov A."/>
            <person name="Schein J."/>
            <person name="Sterck L."/>
            <person name="Aerts A."/>
            <person name="Bhalerao R.R."/>
            <person name="Bhalerao R.P."/>
            <person name="Blaudez D."/>
            <person name="Boerjan W."/>
            <person name="Brun A."/>
            <person name="Brunner A."/>
            <person name="Busov V."/>
            <person name="Campbell M."/>
            <person name="Carlson J."/>
            <person name="Chalot M."/>
            <person name="Chapman J."/>
            <person name="Chen G.-L."/>
            <person name="Cooper D."/>
            <person name="Coutinho P.M."/>
            <person name="Couturier J."/>
            <person name="Covert S."/>
            <person name="Cronk Q."/>
            <person name="Cunningham R."/>
            <person name="Davis J."/>
            <person name="Degroeve S."/>
            <person name="Dejardin A."/>
            <person name="dePamphilis C.W."/>
            <person name="Detter J."/>
            <person name="Dirks B."/>
            <person name="Dubchak I."/>
            <person name="Duplessis S."/>
            <person name="Ehlting J."/>
            <person name="Ellis B."/>
            <person name="Gendler K."/>
            <person name="Goodstein D."/>
            <person name="Gribskov M."/>
            <person name="Grimwood J."/>
            <person name="Groover A."/>
            <person name="Gunter L."/>
            <person name="Hamberger B."/>
            <person name="Heinze B."/>
            <person name="Helariutta Y."/>
            <person name="Henrissat B."/>
            <person name="Holligan D."/>
            <person name="Holt R."/>
            <person name="Huang W."/>
            <person name="Islam-Faridi N."/>
            <person name="Jones S."/>
            <person name="Jones-Rhoades M."/>
            <person name="Jorgensen R."/>
            <person name="Joshi C."/>
            <person name="Kangasjaervi J."/>
            <person name="Karlsson J."/>
            <person name="Kelleher C."/>
            <person name="Kirkpatrick R."/>
            <person name="Kirst M."/>
            <person name="Kohler A."/>
            <person name="Kalluri U."/>
            <person name="Larimer F."/>
            <person name="Leebens-Mack J."/>
            <person name="Leple J.-C."/>
            <person name="Locascio P."/>
            <person name="Lou Y."/>
            <person name="Lucas S."/>
            <person name="Martin F."/>
            <person name="Montanini B."/>
            <person name="Napoli C."/>
            <person name="Nelson D.R."/>
            <person name="Nelson C."/>
            <person name="Nieminen K."/>
            <person name="Nilsson O."/>
            <person name="Pereda V."/>
            <person name="Peter G."/>
            <person name="Philippe R."/>
            <person name="Pilate G."/>
            <person name="Poliakov A."/>
            <person name="Razumovskaya J."/>
            <person name="Richardson P."/>
            <person name="Rinaldi C."/>
            <person name="Ritland K."/>
            <person name="Rouze P."/>
            <person name="Ryaboy D."/>
            <person name="Schmutz J."/>
            <person name="Schrader J."/>
            <person name="Segerman B."/>
            <person name="Shin H."/>
            <person name="Siddiqui A."/>
            <person name="Sterky F."/>
            <person name="Terry A."/>
            <person name="Tsai C.-J."/>
            <person name="Uberbacher E."/>
            <person name="Unneberg P."/>
            <person name="Vahala J."/>
            <person name="Wall K."/>
            <person name="Wessler S."/>
            <person name="Yang G."/>
            <person name="Yin T."/>
            <person name="Douglas C."/>
            <person name="Marra M."/>
            <person name="Sandberg G."/>
            <person name="Van de Peer Y."/>
            <person name="Rokhsar D.S."/>
        </authorList>
    </citation>
    <scope>NUCLEOTIDE SEQUENCE [LARGE SCALE GENOMIC DNA]</scope>
    <source>
        <strain>cv. Nisqually</strain>
    </source>
</reference>
<dbReference type="EMBL" id="EF489041">
    <property type="protein sequence ID" value="ABO36747.1"/>
    <property type="molecule type" value="Genomic_DNA"/>
</dbReference>
<dbReference type="EMBL" id="EF489041">
    <property type="protein sequence ID" value="ABO36781.1"/>
    <property type="molecule type" value="Genomic_DNA"/>
</dbReference>
<dbReference type="SMR" id="A4GYV2"/>
<dbReference type="FunCoup" id="A4GYV2">
    <property type="interactions" value="1055"/>
</dbReference>
<dbReference type="STRING" id="3694.A4GYV2"/>
<dbReference type="KEGG" id="pop:4929714"/>
<dbReference type="KEGG" id="pop:4929771"/>
<dbReference type="InParanoid" id="A4GYV2"/>
<dbReference type="OrthoDB" id="563959at2759"/>
<dbReference type="Proteomes" id="UP000006729">
    <property type="component" value="Chloroplast"/>
</dbReference>
<dbReference type="ExpressionAtlas" id="A4GYV2">
    <property type="expression patterns" value="baseline"/>
</dbReference>
<dbReference type="GO" id="GO:0009507">
    <property type="term" value="C:chloroplast"/>
    <property type="evidence" value="ECO:0007669"/>
    <property type="project" value="UniProtKB-SubCell"/>
</dbReference>
<dbReference type="GO" id="GO:0005762">
    <property type="term" value="C:mitochondrial large ribosomal subunit"/>
    <property type="evidence" value="ECO:0000318"/>
    <property type="project" value="GO_Central"/>
</dbReference>
<dbReference type="GO" id="GO:0003723">
    <property type="term" value="F:RNA binding"/>
    <property type="evidence" value="ECO:0000318"/>
    <property type="project" value="GO_Central"/>
</dbReference>
<dbReference type="GO" id="GO:0019843">
    <property type="term" value="F:rRNA binding"/>
    <property type="evidence" value="ECO:0007669"/>
    <property type="project" value="UniProtKB-UniRule"/>
</dbReference>
<dbReference type="GO" id="GO:0003735">
    <property type="term" value="F:structural constituent of ribosome"/>
    <property type="evidence" value="ECO:0000318"/>
    <property type="project" value="GO_Central"/>
</dbReference>
<dbReference type="GO" id="GO:0016740">
    <property type="term" value="F:transferase activity"/>
    <property type="evidence" value="ECO:0007669"/>
    <property type="project" value="InterPro"/>
</dbReference>
<dbReference type="GO" id="GO:0032543">
    <property type="term" value="P:mitochondrial translation"/>
    <property type="evidence" value="ECO:0000318"/>
    <property type="project" value="GO_Central"/>
</dbReference>
<dbReference type="FunFam" id="4.10.950.10:FF:000001">
    <property type="entry name" value="50S ribosomal protein L2"/>
    <property type="match status" value="1"/>
</dbReference>
<dbReference type="FunFam" id="2.30.30.30:FF:000008">
    <property type="entry name" value="50S ribosomal protein L2, chloroplastic"/>
    <property type="match status" value="1"/>
</dbReference>
<dbReference type="FunFam" id="2.40.50.140:FF:000029">
    <property type="entry name" value="50S ribosomal protein L2, chloroplastic"/>
    <property type="match status" value="1"/>
</dbReference>
<dbReference type="Gene3D" id="2.30.30.30">
    <property type="match status" value="1"/>
</dbReference>
<dbReference type="Gene3D" id="2.40.50.140">
    <property type="entry name" value="Nucleic acid-binding proteins"/>
    <property type="match status" value="1"/>
</dbReference>
<dbReference type="Gene3D" id="4.10.950.10">
    <property type="entry name" value="Ribosomal protein L2, domain 3"/>
    <property type="match status" value="1"/>
</dbReference>
<dbReference type="HAMAP" id="MF_01320_B">
    <property type="entry name" value="Ribosomal_uL2_B"/>
    <property type="match status" value="1"/>
</dbReference>
<dbReference type="InterPro" id="IPR012340">
    <property type="entry name" value="NA-bd_OB-fold"/>
</dbReference>
<dbReference type="InterPro" id="IPR014722">
    <property type="entry name" value="Rib_uL2_dom2"/>
</dbReference>
<dbReference type="InterPro" id="IPR002171">
    <property type="entry name" value="Ribosomal_uL2"/>
</dbReference>
<dbReference type="InterPro" id="IPR005880">
    <property type="entry name" value="Ribosomal_uL2_bac/org-type"/>
</dbReference>
<dbReference type="InterPro" id="IPR022669">
    <property type="entry name" value="Ribosomal_uL2_C"/>
</dbReference>
<dbReference type="InterPro" id="IPR022671">
    <property type="entry name" value="Ribosomal_uL2_CS"/>
</dbReference>
<dbReference type="InterPro" id="IPR014726">
    <property type="entry name" value="Ribosomal_uL2_dom3"/>
</dbReference>
<dbReference type="InterPro" id="IPR022666">
    <property type="entry name" value="Ribosomal_uL2_RNA-bd_dom"/>
</dbReference>
<dbReference type="InterPro" id="IPR008991">
    <property type="entry name" value="Translation_prot_SH3-like_sf"/>
</dbReference>
<dbReference type="NCBIfam" id="TIGR01171">
    <property type="entry name" value="rplB_bact"/>
    <property type="match status" value="1"/>
</dbReference>
<dbReference type="PANTHER" id="PTHR13691:SF5">
    <property type="entry name" value="LARGE RIBOSOMAL SUBUNIT PROTEIN UL2M"/>
    <property type="match status" value="1"/>
</dbReference>
<dbReference type="PANTHER" id="PTHR13691">
    <property type="entry name" value="RIBOSOMAL PROTEIN L2"/>
    <property type="match status" value="1"/>
</dbReference>
<dbReference type="Pfam" id="PF00181">
    <property type="entry name" value="Ribosomal_L2"/>
    <property type="match status" value="1"/>
</dbReference>
<dbReference type="Pfam" id="PF03947">
    <property type="entry name" value="Ribosomal_L2_C"/>
    <property type="match status" value="1"/>
</dbReference>
<dbReference type="PIRSF" id="PIRSF002158">
    <property type="entry name" value="Ribosomal_L2"/>
    <property type="match status" value="1"/>
</dbReference>
<dbReference type="SMART" id="SM01383">
    <property type="entry name" value="Ribosomal_L2"/>
    <property type="match status" value="1"/>
</dbReference>
<dbReference type="SMART" id="SM01382">
    <property type="entry name" value="Ribosomal_L2_C"/>
    <property type="match status" value="1"/>
</dbReference>
<dbReference type="SUPFAM" id="SSF50249">
    <property type="entry name" value="Nucleic acid-binding proteins"/>
    <property type="match status" value="1"/>
</dbReference>
<dbReference type="SUPFAM" id="SSF50104">
    <property type="entry name" value="Translation proteins SH3-like domain"/>
    <property type="match status" value="1"/>
</dbReference>
<dbReference type="PROSITE" id="PS00467">
    <property type="entry name" value="RIBOSOMAL_L2"/>
    <property type="match status" value="1"/>
</dbReference>
<evidence type="ECO:0000250" key="1"/>
<evidence type="ECO:0000255" key="2">
    <source>
        <dbReference type="HAMAP-Rule" id="MF_01320"/>
    </source>
</evidence>
<evidence type="ECO:0000256" key="3">
    <source>
        <dbReference type="SAM" id="MobiDB-lite"/>
    </source>
</evidence>
<evidence type="ECO:0000305" key="4"/>
<accession>A4GYV2</accession>